<accession>Q38WK8</accession>
<protein>
    <recommendedName>
        <fullName evidence="1">UDP-N-acetylglucosamine 1-carboxyvinyltransferase 1</fullName>
        <ecNumber evidence="1">2.5.1.7</ecNumber>
    </recommendedName>
    <alternativeName>
        <fullName evidence="1">Enoylpyruvate transferase 1</fullName>
    </alternativeName>
    <alternativeName>
        <fullName evidence="1">UDP-N-acetylglucosamine enolpyruvyl transferase 1</fullName>
        <shortName evidence="1">EPT 1</shortName>
    </alternativeName>
</protein>
<reference key="1">
    <citation type="journal article" date="2005" name="Nat. Biotechnol.">
        <title>The complete genome sequence of the meat-borne lactic acid bacterium Lactobacillus sakei 23K.</title>
        <authorList>
            <person name="Chaillou S."/>
            <person name="Champomier-Verges M.-C."/>
            <person name="Cornet M."/>
            <person name="Crutz-Le Coq A.-M."/>
            <person name="Dudez A.-M."/>
            <person name="Martin V."/>
            <person name="Beaufils S."/>
            <person name="Darbon-Rongere E."/>
            <person name="Bossy R."/>
            <person name="Loux V."/>
            <person name="Zagorec M."/>
        </authorList>
    </citation>
    <scope>NUCLEOTIDE SEQUENCE [LARGE SCALE GENOMIC DNA]</scope>
    <source>
        <strain>23K</strain>
    </source>
</reference>
<keyword id="KW-0131">Cell cycle</keyword>
<keyword id="KW-0132">Cell division</keyword>
<keyword id="KW-0133">Cell shape</keyword>
<keyword id="KW-0961">Cell wall biogenesis/degradation</keyword>
<keyword id="KW-0963">Cytoplasm</keyword>
<keyword id="KW-0573">Peptidoglycan synthesis</keyword>
<keyword id="KW-0670">Pyruvate</keyword>
<keyword id="KW-1185">Reference proteome</keyword>
<keyword id="KW-0808">Transferase</keyword>
<organism>
    <name type="scientific">Latilactobacillus sakei subsp. sakei (strain 23K)</name>
    <name type="common">Lactobacillus sakei subsp. sakei</name>
    <dbReference type="NCBI Taxonomy" id="314315"/>
    <lineage>
        <taxon>Bacteria</taxon>
        <taxon>Bacillati</taxon>
        <taxon>Bacillota</taxon>
        <taxon>Bacilli</taxon>
        <taxon>Lactobacillales</taxon>
        <taxon>Lactobacillaceae</taxon>
        <taxon>Latilactobacillus</taxon>
    </lineage>
</organism>
<gene>
    <name evidence="1" type="primary">murA1</name>
    <name type="ordered locus">LCA_1123</name>
</gene>
<feature type="chain" id="PRO_0000231217" description="UDP-N-acetylglucosamine 1-carboxyvinyltransferase 1">
    <location>
        <begin position="1"/>
        <end position="433"/>
    </location>
</feature>
<feature type="active site" description="Proton donor" evidence="1">
    <location>
        <position position="119"/>
    </location>
</feature>
<feature type="binding site" evidence="1">
    <location>
        <begin position="22"/>
        <end position="23"/>
    </location>
    <ligand>
        <name>phosphoenolpyruvate</name>
        <dbReference type="ChEBI" id="CHEBI:58702"/>
    </ligand>
</feature>
<feature type="binding site" evidence="1">
    <location>
        <position position="95"/>
    </location>
    <ligand>
        <name>UDP-N-acetyl-alpha-D-glucosamine</name>
        <dbReference type="ChEBI" id="CHEBI:57705"/>
    </ligand>
</feature>
<feature type="binding site" evidence="1">
    <location>
        <begin position="124"/>
        <end position="128"/>
    </location>
    <ligand>
        <name>UDP-N-acetyl-alpha-D-glucosamine</name>
        <dbReference type="ChEBI" id="CHEBI:57705"/>
    </ligand>
</feature>
<feature type="binding site" evidence="1">
    <location>
        <position position="307"/>
    </location>
    <ligand>
        <name>UDP-N-acetyl-alpha-D-glucosamine</name>
        <dbReference type="ChEBI" id="CHEBI:57705"/>
    </ligand>
</feature>
<feature type="binding site" evidence="1">
    <location>
        <position position="329"/>
    </location>
    <ligand>
        <name>UDP-N-acetyl-alpha-D-glucosamine</name>
        <dbReference type="ChEBI" id="CHEBI:57705"/>
    </ligand>
</feature>
<feature type="modified residue" description="2-(S-cysteinyl)pyruvic acid O-phosphothioketal" evidence="1">
    <location>
        <position position="119"/>
    </location>
</feature>
<sequence>MEKLIIQGGQPLVGDVHIEGAKNAVLPIMAAALLASKGPVELTNVPILSDVFMMQDVLKSLDARVKFDEQRNYLMIDANQPLNFEAAFEYVSKMRASIVVMGPLLARLGHARVAMPGGCAIGSRPVDLHLKGFEALGATITQSHGYIEAKADQLVGANIYLDFPSVGATQNIMMAATLAKGTTVIENVAREPEIVDLANVLNKMGAKVFGAGTEEIRIEGVTELKGTEHSIVQDRIEAGTFMIAAAATKGNVLVEEAISEHNKPLLSKLAEMGAQVIEEENGIRIIGPDELKPSNIKTLPYPGFPTDMQAQMTALQLMAHGTSVMTETVFENRFMHLEELRRMNADYQIEGQSVILYGPPELTGAEVAASDLRAAAALVIAGLVANGETLVTNLQYMDRGYYHFHQKLRALGAHISRADFDEAGHRKTTQKLA</sequence>
<name>MURA1_LATSS</name>
<proteinExistence type="inferred from homology"/>
<dbReference type="EC" id="2.5.1.7" evidence="1"/>
<dbReference type="EMBL" id="CR936503">
    <property type="protein sequence ID" value="CAI55424.1"/>
    <property type="molecule type" value="Genomic_DNA"/>
</dbReference>
<dbReference type="RefSeq" id="WP_011374822.1">
    <property type="nucleotide sequence ID" value="NC_007576.1"/>
</dbReference>
<dbReference type="SMR" id="Q38WK8"/>
<dbReference type="STRING" id="314315.LCA_1123"/>
<dbReference type="KEGG" id="lsa:LCA_1123"/>
<dbReference type="eggNOG" id="COG0766">
    <property type="taxonomic scope" value="Bacteria"/>
</dbReference>
<dbReference type="HOGENOM" id="CLU_027387_0_0_9"/>
<dbReference type="OrthoDB" id="9803760at2"/>
<dbReference type="UniPathway" id="UPA00219"/>
<dbReference type="Proteomes" id="UP000002707">
    <property type="component" value="Chromosome"/>
</dbReference>
<dbReference type="GO" id="GO:0005737">
    <property type="term" value="C:cytoplasm"/>
    <property type="evidence" value="ECO:0007669"/>
    <property type="project" value="UniProtKB-SubCell"/>
</dbReference>
<dbReference type="GO" id="GO:0008760">
    <property type="term" value="F:UDP-N-acetylglucosamine 1-carboxyvinyltransferase activity"/>
    <property type="evidence" value="ECO:0007669"/>
    <property type="project" value="UniProtKB-UniRule"/>
</dbReference>
<dbReference type="GO" id="GO:0051301">
    <property type="term" value="P:cell division"/>
    <property type="evidence" value="ECO:0007669"/>
    <property type="project" value="UniProtKB-KW"/>
</dbReference>
<dbReference type="GO" id="GO:0071555">
    <property type="term" value="P:cell wall organization"/>
    <property type="evidence" value="ECO:0007669"/>
    <property type="project" value="UniProtKB-KW"/>
</dbReference>
<dbReference type="GO" id="GO:0009252">
    <property type="term" value="P:peptidoglycan biosynthetic process"/>
    <property type="evidence" value="ECO:0007669"/>
    <property type="project" value="UniProtKB-UniRule"/>
</dbReference>
<dbReference type="GO" id="GO:0008360">
    <property type="term" value="P:regulation of cell shape"/>
    <property type="evidence" value="ECO:0007669"/>
    <property type="project" value="UniProtKB-KW"/>
</dbReference>
<dbReference type="GO" id="GO:0019277">
    <property type="term" value="P:UDP-N-acetylgalactosamine biosynthetic process"/>
    <property type="evidence" value="ECO:0007669"/>
    <property type="project" value="InterPro"/>
</dbReference>
<dbReference type="CDD" id="cd01555">
    <property type="entry name" value="UdpNAET"/>
    <property type="match status" value="1"/>
</dbReference>
<dbReference type="FunFam" id="3.65.10.10:FF:000001">
    <property type="entry name" value="UDP-N-acetylglucosamine 1-carboxyvinyltransferase"/>
    <property type="match status" value="1"/>
</dbReference>
<dbReference type="Gene3D" id="3.65.10.10">
    <property type="entry name" value="Enolpyruvate transferase domain"/>
    <property type="match status" value="2"/>
</dbReference>
<dbReference type="HAMAP" id="MF_00111">
    <property type="entry name" value="MurA"/>
    <property type="match status" value="1"/>
</dbReference>
<dbReference type="InterPro" id="IPR001986">
    <property type="entry name" value="Enolpyruvate_Tfrase_dom"/>
</dbReference>
<dbReference type="InterPro" id="IPR036968">
    <property type="entry name" value="Enolpyruvate_Tfrase_sf"/>
</dbReference>
<dbReference type="InterPro" id="IPR050068">
    <property type="entry name" value="MurA_subfamily"/>
</dbReference>
<dbReference type="InterPro" id="IPR013792">
    <property type="entry name" value="RNA3'P_cycl/enolpyr_Trfase_a/b"/>
</dbReference>
<dbReference type="InterPro" id="IPR005750">
    <property type="entry name" value="UDP_GlcNAc_COvinyl_MurA"/>
</dbReference>
<dbReference type="NCBIfam" id="TIGR01072">
    <property type="entry name" value="murA"/>
    <property type="match status" value="1"/>
</dbReference>
<dbReference type="NCBIfam" id="NF006873">
    <property type="entry name" value="PRK09369.1"/>
    <property type="match status" value="1"/>
</dbReference>
<dbReference type="PANTHER" id="PTHR43783">
    <property type="entry name" value="UDP-N-ACETYLGLUCOSAMINE 1-CARBOXYVINYLTRANSFERASE"/>
    <property type="match status" value="1"/>
</dbReference>
<dbReference type="PANTHER" id="PTHR43783:SF1">
    <property type="entry name" value="UDP-N-ACETYLGLUCOSAMINE 1-CARBOXYVINYLTRANSFERASE"/>
    <property type="match status" value="1"/>
</dbReference>
<dbReference type="Pfam" id="PF00275">
    <property type="entry name" value="EPSP_synthase"/>
    <property type="match status" value="1"/>
</dbReference>
<dbReference type="SUPFAM" id="SSF55205">
    <property type="entry name" value="EPT/RTPC-like"/>
    <property type="match status" value="1"/>
</dbReference>
<evidence type="ECO:0000255" key="1">
    <source>
        <dbReference type="HAMAP-Rule" id="MF_00111"/>
    </source>
</evidence>
<comment type="function">
    <text evidence="1">Cell wall formation. Adds enolpyruvyl to UDP-N-acetylglucosamine.</text>
</comment>
<comment type="catalytic activity">
    <reaction evidence="1">
        <text>phosphoenolpyruvate + UDP-N-acetyl-alpha-D-glucosamine = UDP-N-acetyl-3-O-(1-carboxyvinyl)-alpha-D-glucosamine + phosphate</text>
        <dbReference type="Rhea" id="RHEA:18681"/>
        <dbReference type="ChEBI" id="CHEBI:43474"/>
        <dbReference type="ChEBI" id="CHEBI:57705"/>
        <dbReference type="ChEBI" id="CHEBI:58702"/>
        <dbReference type="ChEBI" id="CHEBI:68483"/>
        <dbReference type="EC" id="2.5.1.7"/>
    </reaction>
</comment>
<comment type="pathway">
    <text evidence="1">Cell wall biogenesis; peptidoglycan biosynthesis.</text>
</comment>
<comment type="subcellular location">
    <subcellularLocation>
        <location evidence="1">Cytoplasm</location>
    </subcellularLocation>
</comment>
<comment type="similarity">
    <text evidence="1">Belongs to the EPSP synthase family. MurA subfamily.</text>
</comment>